<protein>
    <recommendedName>
        <fullName evidence="1">ATP-dependent 6-phosphofructokinase</fullName>
        <shortName evidence="1">ATP-PFK</shortName>
        <shortName evidence="1">Phosphofructokinase</shortName>
        <ecNumber evidence="1">2.7.1.11</ecNumber>
    </recommendedName>
    <alternativeName>
        <fullName evidence="1">Phosphohexokinase</fullName>
    </alternativeName>
</protein>
<sequence length="335" mass="35232">MKRIAVLTSGGDAPGMNAAIRAVVRQAISEGMEVFGIYDGYAGMVAGEIHPLDAASVGDIISRGGTFLHSARYPEFAQLEGQLKGIEQLKKHGIEGVVVIGGDGSYHGAMRLTEHGFPAIGLPGTIDNDIVGTDFTIGFDTAVTTAMDAIDKIRDTSSSHRRTFVIEVMGRNAGDIALWAGIATGADEIIIPEADFKMEDIVASIKAGYECGKKHNIIVLAEGVMSAAEFGQKLKEAGDTSDLRVTELGHIQRGGSPTARDRVLASRMGAHAVKLLKEGIGGVAVGIRNEKMVENPILGTAEEGALFSLTAEGKIVVNNPHKADIELSSLNKSLS</sequence>
<comment type="function">
    <text evidence="1">Catalyzes the phosphorylation of D-fructose 6-phosphate to fructose 1,6-bisphosphate by ATP, the first committing step of glycolysis.</text>
</comment>
<comment type="catalytic activity">
    <reaction evidence="1">
        <text>beta-D-fructose 6-phosphate + ATP = beta-D-fructose 1,6-bisphosphate + ADP + H(+)</text>
        <dbReference type="Rhea" id="RHEA:16109"/>
        <dbReference type="ChEBI" id="CHEBI:15378"/>
        <dbReference type="ChEBI" id="CHEBI:30616"/>
        <dbReference type="ChEBI" id="CHEBI:32966"/>
        <dbReference type="ChEBI" id="CHEBI:57634"/>
        <dbReference type="ChEBI" id="CHEBI:456216"/>
        <dbReference type="EC" id="2.7.1.11"/>
    </reaction>
</comment>
<comment type="cofactor">
    <cofactor evidence="1">
        <name>Mg(2+)</name>
        <dbReference type="ChEBI" id="CHEBI:18420"/>
    </cofactor>
</comment>
<comment type="activity regulation">
    <text evidence="1">Allosterically activated by ADP and other diphosphonucleosides, and allosterically inhibited by phosphoenolpyruvate.</text>
</comment>
<comment type="pathway">
    <text evidence="1">Carbohydrate degradation; glycolysis; D-glyceraldehyde 3-phosphate and glycerone phosphate from D-glucose: step 3/4.</text>
</comment>
<comment type="subunit">
    <text evidence="1">Homotetramer.</text>
</comment>
<comment type="subcellular location">
    <subcellularLocation>
        <location evidence="1">Cytoplasm</location>
    </subcellularLocation>
</comment>
<comment type="similarity">
    <text evidence="1">Belongs to the phosphofructokinase type A (PFKA) family. ATP-dependent PFK group I subfamily. Prokaryotic clade 'B1' sub-subfamily.</text>
</comment>
<dbReference type="EC" id="2.7.1.11" evidence="1"/>
<dbReference type="EMBL" id="CP001015">
    <property type="protein sequence ID" value="ACF56069.1"/>
    <property type="molecule type" value="Genomic_DNA"/>
</dbReference>
<dbReference type="SMR" id="B5E3Z8"/>
<dbReference type="KEGG" id="spx:SPG_0822"/>
<dbReference type="HOGENOM" id="CLU_020655_0_1_9"/>
<dbReference type="UniPathway" id="UPA00109">
    <property type="reaction ID" value="UER00182"/>
</dbReference>
<dbReference type="GO" id="GO:0005945">
    <property type="term" value="C:6-phosphofructokinase complex"/>
    <property type="evidence" value="ECO:0007669"/>
    <property type="project" value="TreeGrafter"/>
</dbReference>
<dbReference type="GO" id="GO:0003872">
    <property type="term" value="F:6-phosphofructokinase activity"/>
    <property type="evidence" value="ECO:0007669"/>
    <property type="project" value="UniProtKB-UniRule"/>
</dbReference>
<dbReference type="GO" id="GO:0016208">
    <property type="term" value="F:AMP binding"/>
    <property type="evidence" value="ECO:0007669"/>
    <property type="project" value="TreeGrafter"/>
</dbReference>
<dbReference type="GO" id="GO:0005524">
    <property type="term" value="F:ATP binding"/>
    <property type="evidence" value="ECO:0007669"/>
    <property type="project" value="UniProtKB-KW"/>
</dbReference>
<dbReference type="GO" id="GO:0070095">
    <property type="term" value="F:fructose-6-phosphate binding"/>
    <property type="evidence" value="ECO:0007669"/>
    <property type="project" value="TreeGrafter"/>
</dbReference>
<dbReference type="GO" id="GO:0042802">
    <property type="term" value="F:identical protein binding"/>
    <property type="evidence" value="ECO:0007669"/>
    <property type="project" value="TreeGrafter"/>
</dbReference>
<dbReference type="GO" id="GO:0046872">
    <property type="term" value="F:metal ion binding"/>
    <property type="evidence" value="ECO:0007669"/>
    <property type="project" value="UniProtKB-KW"/>
</dbReference>
<dbReference type="GO" id="GO:0048029">
    <property type="term" value="F:monosaccharide binding"/>
    <property type="evidence" value="ECO:0007669"/>
    <property type="project" value="TreeGrafter"/>
</dbReference>
<dbReference type="GO" id="GO:0061621">
    <property type="term" value="P:canonical glycolysis"/>
    <property type="evidence" value="ECO:0007669"/>
    <property type="project" value="TreeGrafter"/>
</dbReference>
<dbReference type="GO" id="GO:0030388">
    <property type="term" value="P:fructose 1,6-bisphosphate metabolic process"/>
    <property type="evidence" value="ECO:0007669"/>
    <property type="project" value="TreeGrafter"/>
</dbReference>
<dbReference type="GO" id="GO:0006002">
    <property type="term" value="P:fructose 6-phosphate metabolic process"/>
    <property type="evidence" value="ECO:0007669"/>
    <property type="project" value="InterPro"/>
</dbReference>
<dbReference type="CDD" id="cd00763">
    <property type="entry name" value="Bacterial_PFK"/>
    <property type="match status" value="1"/>
</dbReference>
<dbReference type="FunFam" id="3.40.50.450:FF:000001">
    <property type="entry name" value="ATP-dependent 6-phosphofructokinase"/>
    <property type="match status" value="1"/>
</dbReference>
<dbReference type="FunFam" id="3.40.50.460:FF:000002">
    <property type="entry name" value="ATP-dependent 6-phosphofructokinase"/>
    <property type="match status" value="1"/>
</dbReference>
<dbReference type="Gene3D" id="3.40.50.450">
    <property type="match status" value="1"/>
</dbReference>
<dbReference type="Gene3D" id="3.40.50.460">
    <property type="entry name" value="Phosphofructokinase domain"/>
    <property type="match status" value="1"/>
</dbReference>
<dbReference type="HAMAP" id="MF_00339">
    <property type="entry name" value="Phosphofructokinase_I_B1"/>
    <property type="match status" value="1"/>
</dbReference>
<dbReference type="InterPro" id="IPR022953">
    <property type="entry name" value="ATP_PFK"/>
</dbReference>
<dbReference type="InterPro" id="IPR012003">
    <property type="entry name" value="ATP_PFK_prok-type"/>
</dbReference>
<dbReference type="InterPro" id="IPR012828">
    <property type="entry name" value="PFKA_ATP_prok"/>
</dbReference>
<dbReference type="InterPro" id="IPR015912">
    <property type="entry name" value="Phosphofructokinase_CS"/>
</dbReference>
<dbReference type="InterPro" id="IPR000023">
    <property type="entry name" value="Phosphofructokinase_dom"/>
</dbReference>
<dbReference type="InterPro" id="IPR035966">
    <property type="entry name" value="PKF_sf"/>
</dbReference>
<dbReference type="NCBIfam" id="TIGR02482">
    <property type="entry name" value="PFKA_ATP"/>
    <property type="match status" value="1"/>
</dbReference>
<dbReference type="NCBIfam" id="NF002872">
    <property type="entry name" value="PRK03202.1"/>
    <property type="match status" value="1"/>
</dbReference>
<dbReference type="PANTHER" id="PTHR13697:SF4">
    <property type="entry name" value="ATP-DEPENDENT 6-PHOSPHOFRUCTOKINASE"/>
    <property type="match status" value="1"/>
</dbReference>
<dbReference type="PANTHER" id="PTHR13697">
    <property type="entry name" value="PHOSPHOFRUCTOKINASE"/>
    <property type="match status" value="1"/>
</dbReference>
<dbReference type="Pfam" id="PF00365">
    <property type="entry name" value="PFK"/>
    <property type="match status" value="1"/>
</dbReference>
<dbReference type="PIRSF" id="PIRSF000532">
    <property type="entry name" value="ATP_PFK_prok"/>
    <property type="match status" value="1"/>
</dbReference>
<dbReference type="PRINTS" id="PR00476">
    <property type="entry name" value="PHFRCTKINASE"/>
</dbReference>
<dbReference type="SUPFAM" id="SSF53784">
    <property type="entry name" value="Phosphofructokinase"/>
    <property type="match status" value="1"/>
</dbReference>
<dbReference type="PROSITE" id="PS00433">
    <property type="entry name" value="PHOSPHOFRUCTOKINASE"/>
    <property type="match status" value="1"/>
</dbReference>
<feature type="chain" id="PRO_1000120060" description="ATP-dependent 6-phosphofructokinase">
    <location>
        <begin position="1"/>
        <end position="335"/>
    </location>
</feature>
<feature type="active site" description="Proton acceptor" evidence="1">
    <location>
        <position position="127"/>
    </location>
</feature>
<feature type="binding site" evidence="1">
    <location>
        <position position="11"/>
    </location>
    <ligand>
        <name>ATP</name>
        <dbReference type="ChEBI" id="CHEBI:30616"/>
    </ligand>
</feature>
<feature type="binding site" evidence="1">
    <location>
        <begin position="21"/>
        <end position="25"/>
    </location>
    <ligand>
        <name>ADP</name>
        <dbReference type="ChEBI" id="CHEBI:456216"/>
        <note>allosteric activator; ligand shared between dimeric partners</note>
    </ligand>
</feature>
<feature type="binding site" evidence="1">
    <location>
        <begin position="72"/>
        <end position="73"/>
    </location>
    <ligand>
        <name>ATP</name>
        <dbReference type="ChEBI" id="CHEBI:30616"/>
    </ligand>
</feature>
<feature type="binding site" evidence="1">
    <location>
        <begin position="102"/>
        <end position="105"/>
    </location>
    <ligand>
        <name>ATP</name>
        <dbReference type="ChEBI" id="CHEBI:30616"/>
    </ligand>
</feature>
<feature type="binding site" evidence="1">
    <location>
        <position position="103"/>
    </location>
    <ligand>
        <name>Mg(2+)</name>
        <dbReference type="ChEBI" id="CHEBI:18420"/>
        <note>catalytic</note>
    </ligand>
</feature>
<feature type="binding site" description="in other chain" evidence="1">
    <location>
        <begin position="125"/>
        <end position="127"/>
    </location>
    <ligand>
        <name>substrate</name>
        <note>ligand shared between dimeric partners</note>
    </ligand>
</feature>
<feature type="binding site" description="in other chain" evidence="1">
    <location>
        <position position="154"/>
    </location>
    <ligand>
        <name>ADP</name>
        <dbReference type="ChEBI" id="CHEBI:456216"/>
        <note>allosteric activator; ligand shared between dimeric partners</note>
    </ligand>
</feature>
<feature type="binding site" evidence="1">
    <location>
        <position position="162"/>
    </location>
    <ligand>
        <name>substrate</name>
        <note>ligand shared between dimeric partners</note>
    </ligand>
</feature>
<feature type="binding site" description="in other chain" evidence="1">
    <location>
        <begin position="169"/>
        <end position="171"/>
    </location>
    <ligand>
        <name>substrate</name>
        <note>ligand shared between dimeric partners</note>
    </ligand>
</feature>
<feature type="binding site" description="in other chain" evidence="1">
    <location>
        <begin position="185"/>
        <end position="187"/>
    </location>
    <ligand>
        <name>ADP</name>
        <dbReference type="ChEBI" id="CHEBI:456216"/>
        <note>allosteric activator; ligand shared between dimeric partners</note>
    </ligand>
</feature>
<feature type="binding site" description="in other chain" evidence="1">
    <location>
        <begin position="213"/>
        <end position="215"/>
    </location>
    <ligand>
        <name>ADP</name>
        <dbReference type="ChEBI" id="CHEBI:456216"/>
        <note>allosteric activator; ligand shared between dimeric partners</note>
    </ligand>
</feature>
<feature type="binding site" description="in other chain" evidence="1">
    <location>
        <position position="222"/>
    </location>
    <ligand>
        <name>substrate</name>
        <note>ligand shared between dimeric partners</note>
    </ligand>
</feature>
<feature type="binding site" evidence="1">
    <location>
        <position position="244"/>
    </location>
    <ligand>
        <name>substrate</name>
        <note>ligand shared between dimeric partners</note>
    </ligand>
</feature>
<feature type="binding site" description="in other chain" evidence="1">
    <location>
        <begin position="250"/>
        <end position="253"/>
    </location>
    <ligand>
        <name>substrate</name>
        <note>ligand shared between dimeric partners</note>
    </ligand>
</feature>
<gene>
    <name evidence="1" type="primary">pfkA</name>
    <name type="ordered locus">SPG_0822</name>
</gene>
<evidence type="ECO:0000255" key="1">
    <source>
        <dbReference type="HAMAP-Rule" id="MF_00339"/>
    </source>
</evidence>
<name>PFKA_STRP4</name>
<accession>B5E3Z8</accession>
<organism>
    <name type="scientific">Streptococcus pneumoniae serotype 19F (strain G54)</name>
    <dbReference type="NCBI Taxonomy" id="512566"/>
    <lineage>
        <taxon>Bacteria</taxon>
        <taxon>Bacillati</taxon>
        <taxon>Bacillota</taxon>
        <taxon>Bacilli</taxon>
        <taxon>Lactobacillales</taxon>
        <taxon>Streptococcaceae</taxon>
        <taxon>Streptococcus</taxon>
    </lineage>
</organism>
<keyword id="KW-0021">Allosteric enzyme</keyword>
<keyword id="KW-0067">ATP-binding</keyword>
<keyword id="KW-0963">Cytoplasm</keyword>
<keyword id="KW-0324">Glycolysis</keyword>
<keyword id="KW-0418">Kinase</keyword>
<keyword id="KW-0460">Magnesium</keyword>
<keyword id="KW-0479">Metal-binding</keyword>
<keyword id="KW-0547">Nucleotide-binding</keyword>
<keyword id="KW-0808">Transferase</keyword>
<proteinExistence type="inferred from homology"/>
<reference key="1">
    <citation type="journal article" date="2001" name="Microb. Drug Resist.">
        <title>Annotated draft genomic sequence from a Streptococcus pneumoniae type 19F clinical isolate.</title>
        <authorList>
            <person name="Dopazo J."/>
            <person name="Mendoza A."/>
            <person name="Herrero J."/>
            <person name="Caldara F."/>
            <person name="Humbert Y."/>
            <person name="Friedli L."/>
            <person name="Guerrier M."/>
            <person name="Grand-Schenk E."/>
            <person name="Gandin C."/>
            <person name="de Francesco M."/>
            <person name="Polissi A."/>
            <person name="Buell G."/>
            <person name="Feger G."/>
            <person name="Garcia E."/>
            <person name="Peitsch M."/>
            <person name="Garcia-Bustos J.F."/>
        </authorList>
    </citation>
    <scope>NUCLEOTIDE SEQUENCE [LARGE SCALE GENOMIC DNA]</scope>
    <source>
        <strain>G54</strain>
    </source>
</reference>
<reference key="2">
    <citation type="submission" date="2008-03" db="EMBL/GenBank/DDBJ databases">
        <title>Pneumococcal beta glucoside metabolism investigated by whole genome comparison.</title>
        <authorList>
            <person name="Mulas L."/>
            <person name="Trappetti C."/>
            <person name="Hakenbeck R."/>
            <person name="Iannelli F."/>
            <person name="Pozzi G."/>
            <person name="Davidsen T.M."/>
            <person name="Tettelin H."/>
            <person name="Oggioni M."/>
        </authorList>
    </citation>
    <scope>NUCLEOTIDE SEQUENCE [LARGE SCALE GENOMIC DNA]</scope>
    <source>
        <strain>G54</strain>
    </source>
</reference>